<accession>Q8PBJ4</accession>
<evidence type="ECO:0000255" key="1">
    <source>
        <dbReference type="HAMAP-Rule" id="MF_00267"/>
    </source>
</evidence>
<evidence type="ECO:0000256" key="2">
    <source>
        <dbReference type="SAM" id="MobiDB-lite"/>
    </source>
</evidence>
<name>MINC_XANCP</name>
<reference key="1">
    <citation type="journal article" date="2002" name="Nature">
        <title>Comparison of the genomes of two Xanthomonas pathogens with differing host specificities.</title>
        <authorList>
            <person name="da Silva A.C.R."/>
            <person name="Ferro J.A."/>
            <person name="Reinach F.C."/>
            <person name="Farah C.S."/>
            <person name="Furlan L.R."/>
            <person name="Quaggio R.B."/>
            <person name="Monteiro-Vitorello C.B."/>
            <person name="Van Sluys M.A."/>
            <person name="Almeida N.F. Jr."/>
            <person name="Alves L.M.C."/>
            <person name="do Amaral A.M."/>
            <person name="Bertolini M.C."/>
            <person name="Camargo L.E.A."/>
            <person name="Camarotte G."/>
            <person name="Cannavan F."/>
            <person name="Cardozo J."/>
            <person name="Chambergo F."/>
            <person name="Ciapina L.P."/>
            <person name="Cicarelli R.M.B."/>
            <person name="Coutinho L.L."/>
            <person name="Cursino-Santos J.R."/>
            <person name="El-Dorry H."/>
            <person name="Faria J.B."/>
            <person name="Ferreira A.J.S."/>
            <person name="Ferreira R.C.C."/>
            <person name="Ferro M.I.T."/>
            <person name="Formighieri E.F."/>
            <person name="Franco M.C."/>
            <person name="Greggio C.C."/>
            <person name="Gruber A."/>
            <person name="Katsuyama A.M."/>
            <person name="Kishi L.T."/>
            <person name="Leite R.P."/>
            <person name="Lemos E.G.M."/>
            <person name="Lemos M.V.F."/>
            <person name="Locali E.C."/>
            <person name="Machado M.A."/>
            <person name="Madeira A.M.B.N."/>
            <person name="Martinez-Rossi N.M."/>
            <person name="Martins E.C."/>
            <person name="Meidanis J."/>
            <person name="Menck C.F.M."/>
            <person name="Miyaki C.Y."/>
            <person name="Moon D.H."/>
            <person name="Moreira L.M."/>
            <person name="Novo M.T.M."/>
            <person name="Okura V.K."/>
            <person name="Oliveira M.C."/>
            <person name="Oliveira V.R."/>
            <person name="Pereira H.A."/>
            <person name="Rossi A."/>
            <person name="Sena J.A.D."/>
            <person name="Silva C."/>
            <person name="de Souza R.F."/>
            <person name="Spinola L.A.F."/>
            <person name="Takita M.A."/>
            <person name="Tamura R.E."/>
            <person name="Teixeira E.C."/>
            <person name="Tezza R.I.D."/>
            <person name="Trindade dos Santos M."/>
            <person name="Truffi D."/>
            <person name="Tsai S.M."/>
            <person name="White F.F."/>
            <person name="Setubal J.C."/>
            <person name="Kitajima J.P."/>
        </authorList>
    </citation>
    <scope>NUCLEOTIDE SEQUENCE [LARGE SCALE GENOMIC DNA]</scope>
    <source>
        <strain>ATCC 33913 / DSM 3586 / NCPPB 528 / LMG 568 / P 25</strain>
    </source>
</reference>
<keyword id="KW-0131">Cell cycle</keyword>
<keyword id="KW-0132">Cell division</keyword>
<keyword id="KW-1185">Reference proteome</keyword>
<keyword id="KW-0717">Septation</keyword>
<proteinExistence type="inferred from homology"/>
<sequence>MSSVNVDFEQAGELKIGQVGIANLRIRTLDVPRLVREMQDRVTRAPKLFGRAAVILDFGGLAQAPDLATAKALLDGLRSAGVLPVALAYGTSEIDLLSQQLGIPLLAKFRAQYETAAVSPPPPPPPPPARAEPAAPVARPAPGRMQRNAVRSGQQLYAENCDLTVLSTVGAGAEVIADGSIHIYGTLRGRALAGAQGNPDARIFCRDFHAELVAIAGHYKVLDDVPMDLRGKAVQVWLEQDQIKIAALD</sequence>
<feature type="chain" id="PRO_0000189074" description="Probable septum site-determining protein MinC">
    <location>
        <begin position="1"/>
        <end position="249"/>
    </location>
</feature>
<feature type="region of interest" description="Disordered" evidence="2">
    <location>
        <begin position="116"/>
        <end position="149"/>
    </location>
</feature>
<feature type="compositionally biased region" description="Pro residues" evidence="2">
    <location>
        <begin position="119"/>
        <end position="130"/>
    </location>
</feature>
<feature type="compositionally biased region" description="Low complexity" evidence="2">
    <location>
        <begin position="131"/>
        <end position="142"/>
    </location>
</feature>
<gene>
    <name evidence="1" type="primary">minC</name>
    <name type="ordered locus">XCC1125</name>
</gene>
<protein>
    <recommendedName>
        <fullName evidence="1">Probable septum site-determining protein MinC</fullName>
    </recommendedName>
</protein>
<organism>
    <name type="scientific">Xanthomonas campestris pv. campestris (strain ATCC 33913 / DSM 3586 / NCPPB 528 / LMG 568 / P 25)</name>
    <dbReference type="NCBI Taxonomy" id="190485"/>
    <lineage>
        <taxon>Bacteria</taxon>
        <taxon>Pseudomonadati</taxon>
        <taxon>Pseudomonadota</taxon>
        <taxon>Gammaproteobacteria</taxon>
        <taxon>Lysobacterales</taxon>
        <taxon>Lysobacteraceae</taxon>
        <taxon>Xanthomonas</taxon>
    </lineage>
</organism>
<comment type="function">
    <text evidence="1">Cell division inhibitor that blocks the formation of polar Z ring septums. Rapidly oscillates between the poles of the cell to destabilize FtsZ filaments that have formed before they mature into polar Z rings. Prevents FtsZ polymerization.</text>
</comment>
<comment type="subunit">
    <text evidence="1">Interacts with MinD and FtsZ.</text>
</comment>
<comment type="similarity">
    <text evidence="1">Belongs to the MinC family.</text>
</comment>
<dbReference type="EMBL" id="AE008922">
    <property type="protein sequence ID" value="AAM40424.1"/>
    <property type="molecule type" value="Genomic_DNA"/>
</dbReference>
<dbReference type="RefSeq" id="NP_636500.1">
    <property type="nucleotide sequence ID" value="NC_003902.1"/>
</dbReference>
<dbReference type="RefSeq" id="WP_011036325.1">
    <property type="nucleotide sequence ID" value="NC_003902.1"/>
</dbReference>
<dbReference type="SMR" id="Q8PBJ4"/>
<dbReference type="STRING" id="190485.XCC1125"/>
<dbReference type="EnsemblBacteria" id="AAM40424">
    <property type="protein sequence ID" value="AAM40424"/>
    <property type="gene ID" value="XCC1125"/>
</dbReference>
<dbReference type="KEGG" id="xcc:XCC1125"/>
<dbReference type="PATRIC" id="fig|190485.4.peg.1202"/>
<dbReference type="eggNOG" id="COG0850">
    <property type="taxonomic scope" value="Bacteria"/>
</dbReference>
<dbReference type="HOGENOM" id="CLU_067812_0_1_6"/>
<dbReference type="OrthoDB" id="9794530at2"/>
<dbReference type="Proteomes" id="UP000001010">
    <property type="component" value="Chromosome"/>
</dbReference>
<dbReference type="GO" id="GO:0000902">
    <property type="term" value="P:cell morphogenesis"/>
    <property type="evidence" value="ECO:0007669"/>
    <property type="project" value="InterPro"/>
</dbReference>
<dbReference type="GO" id="GO:0000917">
    <property type="term" value="P:division septum assembly"/>
    <property type="evidence" value="ECO:0007669"/>
    <property type="project" value="UniProtKB-KW"/>
</dbReference>
<dbReference type="GO" id="GO:0051302">
    <property type="term" value="P:regulation of cell division"/>
    <property type="evidence" value="ECO:0007669"/>
    <property type="project" value="InterPro"/>
</dbReference>
<dbReference type="GO" id="GO:1901891">
    <property type="term" value="P:regulation of cell septum assembly"/>
    <property type="evidence" value="ECO:0007669"/>
    <property type="project" value="InterPro"/>
</dbReference>
<dbReference type="Gene3D" id="2.160.20.70">
    <property type="match status" value="1"/>
</dbReference>
<dbReference type="Gene3D" id="3.30.70.260">
    <property type="match status" value="1"/>
</dbReference>
<dbReference type="HAMAP" id="MF_00267">
    <property type="entry name" value="MinC"/>
    <property type="match status" value="1"/>
</dbReference>
<dbReference type="InterPro" id="IPR016098">
    <property type="entry name" value="CAP/MinC_C"/>
</dbReference>
<dbReference type="InterPro" id="IPR013033">
    <property type="entry name" value="MinC"/>
</dbReference>
<dbReference type="InterPro" id="IPR036145">
    <property type="entry name" value="MinC_C_sf"/>
</dbReference>
<dbReference type="InterPro" id="IPR007874">
    <property type="entry name" value="MinC_N"/>
</dbReference>
<dbReference type="InterPro" id="IPR005526">
    <property type="entry name" value="Septum_form_inhib_MinC_C"/>
</dbReference>
<dbReference type="NCBIfam" id="TIGR01222">
    <property type="entry name" value="minC"/>
    <property type="match status" value="1"/>
</dbReference>
<dbReference type="PANTHER" id="PTHR34108">
    <property type="entry name" value="SEPTUM SITE-DETERMINING PROTEIN MINC"/>
    <property type="match status" value="1"/>
</dbReference>
<dbReference type="PANTHER" id="PTHR34108:SF1">
    <property type="entry name" value="SEPTUM SITE-DETERMINING PROTEIN MINC"/>
    <property type="match status" value="1"/>
</dbReference>
<dbReference type="Pfam" id="PF03775">
    <property type="entry name" value="MinC_C"/>
    <property type="match status" value="1"/>
</dbReference>
<dbReference type="Pfam" id="PF05209">
    <property type="entry name" value="MinC_N"/>
    <property type="match status" value="1"/>
</dbReference>
<dbReference type="SUPFAM" id="SSF63848">
    <property type="entry name" value="Cell-division inhibitor MinC, C-terminal domain"/>
    <property type="match status" value="1"/>
</dbReference>